<feature type="chain" id="PRO_0000168669" description="Uncharacterized protein YbdJ">
    <location>
        <begin position="1"/>
        <end position="82"/>
    </location>
</feature>
<feature type="transmembrane region" description="Helical" evidence="1">
    <location>
        <begin position="8"/>
        <end position="28"/>
    </location>
</feature>
<feature type="transmembrane region" description="Helical" evidence="1">
    <location>
        <begin position="50"/>
        <end position="70"/>
    </location>
</feature>
<proteinExistence type="predicted"/>
<organism>
    <name type="scientific">Escherichia coli (strain K12)</name>
    <dbReference type="NCBI Taxonomy" id="83333"/>
    <lineage>
        <taxon>Bacteria</taxon>
        <taxon>Pseudomonadati</taxon>
        <taxon>Pseudomonadota</taxon>
        <taxon>Gammaproteobacteria</taxon>
        <taxon>Enterobacterales</taxon>
        <taxon>Enterobacteriaceae</taxon>
        <taxon>Escherichia</taxon>
    </lineage>
</organism>
<accession>P77506</accession>
<keyword id="KW-1003">Cell membrane</keyword>
<keyword id="KW-0472">Membrane</keyword>
<keyword id="KW-1185">Reference proteome</keyword>
<keyword id="KW-0812">Transmembrane</keyword>
<keyword id="KW-1133">Transmembrane helix</keyword>
<gene>
    <name type="primary">ybdJ</name>
    <name type="ordered locus">b0580</name>
    <name type="ordered locus">JW0569</name>
</gene>
<sequence>MKHPLETLTTAAGILLMAFLSCLLLPAPALGLALAQKLVTMFHLMDLSQLYTLLFCLWFLVLGAIEYFVLRFIWRRWFSLAD</sequence>
<reference key="1">
    <citation type="journal article" date="1996" name="DNA Res.">
        <title>A 718-kb DNA sequence of the Escherichia coli K-12 genome corresponding to the 12.7-28.0 min region on the linkage map.</title>
        <authorList>
            <person name="Oshima T."/>
            <person name="Aiba H."/>
            <person name="Baba T."/>
            <person name="Fujita K."/>
            <person name="Hayashi K."/>
            <person name="Honjo A."/>
            <person name="Ikemoto K."/>
            <person name="Inada T."/>
            <person name="Itoh T."/>
            <person name="Kajihara M."/>
            <person name="Kanai K."/>
            <person name="Kashimoto K."/>
            <person name="Kimura S."/>
            <person name="Kitagawa M."/>
            <person name="Makino K."/>
            <person name="Masuda S."/>
            <person name="Miki T."/>
            <person name="Mizobuchi K."/>
            <person name="Mori H."/>
            <person name="Motomura K."/>
            <person name="Nakamura Y."/>
            <person name="Nashimoto H."/>
            <person name="Nishio Y."/>
            <person name="Saito N."/>
            <person name="Sampei G."/>
            <person name="Seki Y."/>
            <person name="Tagami H."/>
            <person name="Takemoto K."/>
            <person name="Wada C."/>
            <person name="Yamamoto Y."/>
            <person name="Yano M."/>
            <person name="Horiuchi T."/>
        </authorList>
    </citation>
    <scope>NUCLEOTIDE SEQUENCE [LARGE SCALE GENOMIC DNA]</scope>
    <source>
        <strain>K12 / W3110 / ATCC 27325 / DSM 5911</strain>
    </source>
</reference>
<reference key="2">
    <citation type="submission" date="1997-01" db="EMBL/GenBank/DDBJ databases">
        <title>Sequence of minutes 4-25 of Escherichia coli.</title>
        <authorList>
            <person name="Chung E."/>
            <person name="Allen E."/>
            <person name="Araujo R."/>
            <person name="Aparicio A.M."/>
            <person name="Davis K."/>
            <person name="Duncan M."/>
            <person name="Federspiel N."/>
            <person name="Hyman R."/>
            <person name="Kalman S."/>
            <person name="Komp C."/>
            <person name="Kurdi O."/>
            <person name="Lew H."/>
            <person name="Lin D."/>
            <person name="Namath A."/>
            <person name="Oefner P."/>
            <person name="Roberts D."/>
            <person name="Schramm S."/>
            <person name="Davis R.W."/>
        </authorList>
    </citation>
    <scope>NUCLEOTIDE SEQUENCE [LARGE SCALE GENOMIC DNA]</scope>
    <source>
        <strain>K12 / MG1655 / ATCC 47076</strain>
    </source>
</reference>
<reference key="3">
    <citation type="journal article" date="1997" name="Science">
        <title>The complete genome sequence of Escherichia coli K-12.</title>
        <authorList>
            <person name="Blattner F.R."/>
            <person name="Plunkett G. III"/>
            <person name="Bloch C.A."/>
            <person name="Perna N.T."/>
            <person name="Burland V."/>
            <person name="Riley M."/>
            <person name="Collado-Vides J."/>
            <person name="Glasner J.D."/>
            <person name="Rode C.K."/>
            <person name="Mayhew G.F."/>
            <person name="Gregor J."/>
            <person name="Davis N.W."/>
            <person name="Kirkpatrick H.A."/>
            <person name="Goeden M.A."/>
            <person name="Rose D.J."/>
            <person name="Mau B."/>
            <person name="Shao Y."/>
        </authorList>
    </citation>
    <scope>NUCLEOTIDE SEQUENCE [LARGE SCALE GENOMIC DNA]</scope>
    <source>
        <strain>K12 / MG1655 / ATCC 47076</strain>
    </source>
</reference>
<reference key="4">
    <citation type="journal article" date="2006" name="Mol. Syst. Biol.">
        <title>Highly accurate genome sequences of Escherichia coli K-12 strains MG1655 and W3110.</title>
        <authorList>
            <person name="Hayashi K."/>
            <person name="Morooka N."/>
            <person name="Yamamoto Y."/>
            <person name="Fujita K."/>
            <person name="Isono K."/>
            <person name="Choi S."/>
            <person name="Ohtsubo E."/>
            <person name="Baba T."/>
            <person name="Wanner B.L."/>
            <person name="Mori H."/>
            <person name="Horiuchi T."/>
        </authorList>
    </citation>
    <scope>NUCLEOTIDE SEQUENCE [LARGE SCALE GENOMIC DNA]</scope>
    <source>
        <strain>K12 / W3110 / ATCC 27325 / DSM 5911</strain>
    </source>
</reference>
<name>YBDJ_ECOLI</name>
<comment type="subcellular location">
    <subcellularLocation>
        <location evidence="2">Cell membrane</location>
        <topology evidence="2">Multi-pass membrane protein</topology>
    </subcellularLocation>
</comment>
<evidence type="ECO:0000255" key="1"/>
<evidence type="ECO:0000305" key="2"/>
<protein>
    <recommendedName>
        <fullName>Uncharacterized protein YbdJ</fullName>
    </recommendedName>
</protein>
<dbReference type="EMBL" id="U82598">
    <property type="protein sequence ID" value="AAB40778.1"/>
    <property type="molecule type" value="Genomic_DNA"/>
</dbReference>
<dbReference type="EMBL" id="U00096">
    <property type="protein sequence ID" value="AAC73681.1"/>
    <property type="molecule type" value="Genomic_DNA"/>
</dbReference>
<dbReference type="EMBL" id="AP009048">
    <property type="protein sequence ID" value="BAA35220.1"/>
    <property type="molecule type" value="Genomic_DNA"/>
</dbReference>
<dbReference type="PIR" id="B64791">
    <property type="entry name" value="B64791"/>
</dbReference>
<dbReference type="RefSeq" id="NP_415112.1">
    <property type="nucleotide sequence ID" value="NC_000913.3"/>
</dbReference>
<dbReference type="RefSeq" id="WP_000682509.1">
    <property type="nucleotide sequence ID" value="NZ_LN832404.1"/>
</dbReference>
<dbReference type="SMR" id="P77506"/>
<dbReference type="BioGRID" id="4260713">
    <property type="interactions" value="7"/>
</dbReference>
<dbReference type="FunCoup" id="P77506">
    <property type="interactions" value="3"/>
</dbReference>
<dbReference type="STRING" id="511145.b0580"/>
<dbReference type="PaxDb" id="511145-b0580"/>
<dbReference type="EnsemblBacteria" id="AAC73681">
    <property type="protein sequence ID" value="AAC73681"/>
    <property type="gene ID" value="b0580"/>
</dbReference>
<dbReference type="GeneID" id="947183"/>
<dbReference type="KEGG" id="ecj:JW0569"/>
<dbReference type="KEGG" id="eco:b0580"/>
<dbReference type="KEGG" id="ecoc:C3026_02880"/>
<dbReference type="PATRIC" id="fig|1411691.4.peg.1694"/>
<dbReference type="EchoBASE" id="EB3407"/>
<dbReference type="eggNOG" id="ENOG5032V4Y">
    <property type="taxonomic scope" value="Bacteria"/>
</dbReference>
<dbReference type="HOGENOM" id="CLU_194433_0_0_6"/>
<dbReference type="InParanoid" id="P77506"/>
<dbReference type="OMA" id="FVWRRWF"/>
<dbReference type="OrthoDB" id="6540193at2"/>
<dbReference type="PhylomeDB" id="P77506"/>
<dbReference type="BioCyc" id="EcoCyc:G6325-MONOMER"/>
<dbReference type="PRO" id="PR:P77506"/>
<dbReference type="Proteomes" id="UP000000625">
    <property type="component" value="Chromosome"/>
</dbReference>
<dbReference type="GO" id="GO:0005886">
    <property type="term" value="C:plasma membrane"/>
    <property type="evidence" value="ECO:0007669"/>
    <property type="project" value="UniProtKB-SubCell"/>
</dbReference>
<dbReference type="InterPro" id="IPR010590">
    <property type="entry name" value="DUF1158"/>
</dbReference>
<dbReference type="Pfam" id="PF06643">
    <property type="entry name" value="DUF1158"/>
    <property type="match status" value="1"/>
</dbReference>
<dbReference type="PROSITE" id="PS51257">
    <property type="entry name" value="PROKAR_LIPOPROTEIN"/>
    <property type="match status" value="1"/>
</dbReference>